<accession>A8N4R8</accession>
<reference key="1">
    <citation type="journal article" date="2010" name="Proc. Natl. Acad. Sci. U.S.A.">
        <title>Insights into evolution of multicellular fungi from the assembled chromosomes of the mushroom Coprinopsis cinerea (Coprinus cinereus).</title>
        <authorList>
            <person name="Stajich J.E."/>
            <person name="Wilke S.K."/>
            <person name="Ahren D."/>
            <person name="Au C.H."/>
            <person name="Birren B.W."/>
            <person name="Borodovsky M."/>
            <person name="Burns C."/>
            <person name="Canbaeck B."/>
            <person name="Casselton L.A."/>
            <person name="Cheng C.K."/>
            <person name="Deng J."/>
            <person name="Dietrich F.S."/>
            <person name="Fargo D.C."/>
            <person name="Farman M.L."/>
            <person name="Gathman A.C."/>
            <person name="Goldberg J."/>
            <person name="Guigo R."/>
            <person name="Hoegger P.J."/>
            <person name="Hooker J.B."/>
            <person name="Huggins A."/>
            <person name="James T.Y."/>
            <person name="Kamada T."/>
            <person name="Kilaru S."/>
            <person name="Kodira C."/>
            <person name="Kuees U."/>
            <person name="Kupfer D."/>
            <person name="Kwan H.S."/>
            <person name="Lomsadze A."/>
            <person name="Li W."/>
            <person name="Lilly W.W."/>
            <person name="Ma L.-J."/>
            <person name="Mackey A.J."/>
            <person name="Manning G."/>
            <person name="Martin F."/>
            <person name="Muraguchi H."/>
            <person name="Natvig D.O."/>
            <person name="Palmerini H."/>
            <person name="Ramesh M.A."/>
            <person name="Rehmeyer C.J."/>
            <person name="Roe B.A."/>
            <person name="Shenoy N."/>
            <person name="Stanke M."/>
            <person name="Ter-Hovhannisyan V."/>
            <person name="Tunlid A."/>
            <person name="Velagapudi R."/>
            <person name="Vision T.J."/>
            <person name="Zeng Q."/>
            <person name="Zolan M.E."/>
            <person name="Pukkila P.J."/>
        </authorList>
    </citation>
    <scope>NUCLEOTIDE SEQUENCE [LARGE SCALE GENOMIC DNA]</scope>
    <source>
        <strain>Okayama-7 / 130 / ATCC MYA-4618 / FGSC 9003</strain>
    </source>
</reference>
<keyword id="KW-0028">Amino-acid biosynthesis</keyword>
<keyword id="KW-0963">Cytoplasm</keyword>
<keyword id="KW-0223">Dioxygenase</keyword>
<keyword id="KW-0408">Iron</keyword>
<keyword id="KW-0479">Metal-binding</keyword>
<keyword id="KW-0486">Methionine biosynthesis</keyword>
<keyword id="KW-0533">Nickel</keyword>
<keyword id="KW-0539">Nucleus</keyword>
<keyword id="KW-0560">Oxidoreductase</keyword>
<keyword id="KW-1185">Reference proteome</keyword>
<protein>
    <recommendedName>
        <fullName evidence="1">Acireductone dioxygenase 2</fullName>
    </recommendedName>
    <alternativeName>
        <fullName evidence="1">Acireductone dioxygenase (Fe(2+)-requiring) 2</fullName>
        <shortName evidence="1">ARD' 2</shortName>
        <shortName evidence="1">Fe-ARD 2</shortName>
        <ecNumber evidence="1">1.13.11.54</ecNumber>
    </alternativeName>
    <alternativeName>
        <fullName evidence="1">Acireductone dioxygenase (Ni(2+)-requiring) 2</fullName>
        <shortName evidence="1">ARD 2</shortName>
        <shortName evidence="1">Ni-ARD 2</shortName>
        <ecNumber evidence="1">1.13.11.53</ecNumber>
    </alternativeName>
</protein>
<evidence type="ECO:0000255" key="1">
    <source>
        <dbReference type="HAMAP-Rule" id="MF_03154"/>
    </source>
</evidence>
<gene>
    <name evidence="1" type="primary">ADI1-2</name>
    <name type="ORF">CC1G_11133</name>
</gene>
<comment type="function">
    <text evidence="1">Catalyzes 2 different reactions between oxygen and the acireductone 1,2-dihydroxy-3-keto-5-methylthiopentene (DHK-MTPene) depending upon the metal bound in the active site. Fe-containing acireductone dioxygenase (Fe-ARD) produces formate and 2-keto-4-methylthiobutyrate (KMTB), the alpha-ketoacid precursor of methionine in the methionine recycle pathway. Ni-containing acireductone dioxygenase (Ni-ARD) produces methylthiopropionate, carbon monoxide and formate, and does not lie on the methionine recycle pathway.</text>
</comment>
<comment type="catalytic activity">
    <reaction evidence="1">
        <text>1,2-dihydroxy-5-(methylsulfanyl)pent-1-en-3-one + O2 = 4-methylsulfanyl-2-oxobutanoate + formate + 2 H(+)</text>
        <dbReference type="Rhea" id="RHEA:24504"/>
        <dbReference type="ChEBI" id="CHEBI:15378"/>
        <dbReference type="ChEBI" id="CHEBI:15379"/>
        <dbReference type="ChEBI" id="CHEBI:15740"/>
        <dbReference type="ChEBI" id="CHEBI:16723"/>
        <dbReference type="ChEBI" id="CHEBI:49252"/>
        <dbReference type="EC" id="1.13.11.54"/>
    </reaction>
</comment>
<comment type="catalytic activity">
    <reaction evidence="1">
        <text>1,2-dihydroxy-5-(methylsulfanyl)pent-1-en-3-one + O2 = 3-(methylsulfanyl)propanoate + CO + formate + 2 H(+)</text>
        <dbReference type="Rhea" id="RHEA:14161"/>
        <dbReference type="ChEBI" id="CHEBI:15378"/>
        <dbReference type="ChEBI" id="CHEBI:15379"/>
        <dbReference type="ChEBI" id="CHEBI:15740"/>
        <dbReference type="ChEBI" id="CHEBI:17245"/>
        <dbReference type="ChEBI" id="CHEBI:49016"/>
        <dbReference type="ChEBI" id="CHEBI:49252"/>
        <dbReference type="EC" id="1.13.11.53"/>
    </reaction>
</comment>
<comment type="cofactor">
    <cofactor evidence="1">
        <name>Fe(2+)</name>
        <dbReference type="ChEBI" id="CHEBI:29033"/>
    </cofactor>
    <cofactor evidence="1">
        <name>Ni(2+)</name>
        <dbReference type="ChEBI" id="CHEBI:49786"/>
    </cofactor>
    <text evidence="1">Binds either 1 Fe or Ni cation per monomer. Iron-binding promotes an acireductone dioxygenase reaction producing 2-keto-4-methylthiobutyrate, while nickel-binding promotes an acireductone dioxygenase reaction producing 3-(methylsulfanyl)propanoate.</text>
</comment>
<comment type="pathway">
    <text evidence="1">Amino-acid biosynthesis; L-methionine biosynthesis via salvage pathway; L-methionine from S-methyl-5-thio-alpha-D-ribose 1-phosphate: step 5/6.</text>
</comment>
<comment type="subcellular location">
    <subcellularLocation>
        <location evidence="1">Cytoplasm</location>
    </subcellularLocation>
    <subcellularLocation>
        <location evidence="1">Nucleus</location>
    </subcellularLocation>
</comment>
<comment type="similarity">
    <text evidence="1">Belongs to the acireductone dioxygenase (ARD) family.</text>
</comment>
<feature type="chain" id="PRO_0000414356" description="Acireductone dioxygenase 2">
    <location>
        <begin position="1"/>
        <end position="201"/>
    </location>
</feature>
<feature type="binding site" evidence="1">
    <location>
        <position position="83"/>
    </location>
    <ligand>
        <name>Fe(2+)</name>
        <dbReference type="ChEBI" id="CHEBI:29033"/>
        <note>for iron-dependent acireductone dioxygenase activity</note>
    </ligand>
</feature>
<feature type="binding site" evidence="1">
    <location>
        <position position="83"/>
    </location>
    <ligand>
        <name>Ni(2+)</name>
        <dbReference type="ChEBI" id="CHEBI:49786"/>
        <note>for nickel-dependent acireductone dioxygenase activity</note>
    </ligand>
</feature>
<feature type="binding site" evidence="1">
    <location>
        <position position="85"/>
    </location>
    <ligand>
        <name>Fe(2+)</name>
        <dbReference type="ChEBI" id="CHEBI:29033"/>
        <note>for iron-dependent acireductone dioxygenase activity</note>
    </ligand>
</feature>
<feature type="binding site" evidence="1">
    <location>
        <position position="85"/>
    </location>
    <ligand>
        <name>Ni(2+)</name>
        <dbReference type="ChEBI" id="CHEBI:49786"/>
        <note>for nickel-dependent acireductone dioxygenase activity</note>
    </ligand>
</feature>
<feature type="binding site" evidence="1">
    <location>
        <position position="89"/>
    </location>
    <ligand>
        <name>Fe(2+)</name>
        <dbReference type="ChEBI" id="CHEBI:29033"/>
        <note>for iron-dependent acireductone dioxygenase activity</note>
    </ligand>
</feature>
<feature type="binding site" evidence="1">
    <location>
        <position position="89"/>
    </location>
    <ligand>
        <name>Ni(2+)</name>
        <dbReference type="ChEBI" id="CHEBI:49786"/>
        <note>for nickel-dependent acireductone dioxygenase activity</note>
    </ligand>
</feature>
<feature type="binding site" evidence="1">
    <location>
        <position position="129"/>
    </location>
    <ligand>
        <name>Fe(2+)</name>
        <dbReference type="ChEBI" id="CHEBI:29033"/>
        <note>for iron-dependent acireductone dioxygenase activity</note>
    </ligand>
</feature>
<feature type="binding site" evidence="1">
    <location>
        <position position="129"/>
    </location>
    <ligand>
        <name>Ni(2+)</name>
        <dbReference type="ChEBI" id="CHEBI:49786"/>
        <note>for nickel-dependent acireductone dioxygenase activity</note>
    </ligand>
</feature>
<name>MTND2_COPC7</name>
<sequence length="201" mass="24113">MRAWYFDELPGHQKLPHMGEPVPNQKVYDLGVKHWKIPLDGHEETINQIAKERDYPNRDIINISKEGLGELYDEKMVYFFQEHMHEDEEIRYILDGTGYYDIRETPTDKWIRFQIEAEDLVIIPVGIYHRFTLDEGDYIKSIRLFRADPKWVYMYRSKEMDVNPYRLEYLKQTKEKLGLPVAPAAVGWGAWLWSWITWSKL</sequence>
<dbReference type="EC" id="1.13.11.54" evidence="1"/>
<dbReference type="EC" id="1.13.11.53" evidence="1"/>
<dbReference type="EMBL" id="AACS02000003">
    <property type="protein sequence ID" value="EAU91947.1"/>
    <property type="molecule type" value="Genomic_DNA"/>
</dbReference>
<dbReference type="RefSeq" id="XP_001829863.1">
    <property type="nucleotide sequence ID" value="XM_001829811.1"/>
</dbReference>
<dbReference type="SMR" id="A8N4R8"/>
<dbReference type="FunCoup" id="A8N4R8">
    <property type="interactions" value="78"/>
</dbReference>
<dbReference type="STRING" id="240176.A8N4R8"/>
<dbReference type="GeneID" id="6006300"/>
<dbReference type="KEGG" id="cci:CC1G_11133"/>
<dbReference type="VEuPathDB" id="FungiDB:CC1G_11133"/>
<dbReference type="eggNOG" id="KOG2107">
    <property type="taxonomic scope" value="Eukaryota"/>
</dbReference>
<dbReference type="HOGENOM" id="CLU_090154_1_0_1"/>
<dbReference type="InParanoid" id="A8N4R8"/>
<dbReference type="OMA" id="NNYIKLM"/>
<dbReference type="OrthoDB" id="1867259at2759"/>
<dbReference type="UniPathway" id="UPA00904">
    <property type="reaction ID" value="UER00878"/>
</dbReference>
<dbReference type="Proteomes" id="UP000001861">
    <property type="component" value="Unassembled WGS sequence"/>
</dbReference>
<dbReference type="GO" id="GO:0005737">
    <property type="term" value="C:cytoplasm"/>
    <property type="evidence" value="ECO:0007669"/>
    <property type="project" value="UniProtKB-SubCell"/>
</dbReference>
<dbReference type="GO" id="GO:0005634">
    <property type="term" value="C:nucleus"/>
    <property type="evidence" value="ECO:0007669"/>
    <property type="project" value="UniProtKB-SubCell"/>
</dbReference>
<dbReference type="GO" id="GO:0010308">
    <property type="term" value="F:acireductone dioxygenase (Ni2+-requiring) activity"/>
    <property type="evidence" value="ECO:0007669"/>
    <property type="project" value="UniProtKB-UniRule"/>
</dbReference>
<dbReference type="GO" id="GO:0010309">
    <property type="term" value="F:acireductone dioxygenase [iron(II)-requiring] activity"/>
    <property type="evidence" value="ECO:0007669"/>
    <property type="project" value="UniProtKB-UniRule"/>
</dbReference>
<dbReference type="GO" id="GO:0005506">
    <property type="term" value="F:iron ion binding"/>
    <property type="evidence" value="ECO:0007669"/>
    <property type="project" value="UniProtKB-UniRule"/>
</dbReference>
<dbReference type="GO" id="GO:0016151">
    <property type="term" value="F:nickel cation binding"/>
    <property type="evidence" value="ECO:0007669"/>
    <property type="project" value="UniProtKB-UniRule"/>
</dbReference>
<dbReference type="GO" id="GO:0019509">
    <property type="term" value="P:L-methionine salvage from methylthioadenosine"/>
    <property type="evidence" value="ECO:0007669"/>
    <property type="project" value="UniProtKB-UniRule"/>
</dbReference>
<dbReference type="CDD" id="cd02232">
    <property type="entry name" value="cupin_ARD"/>
    <property type="match status" value="1"/>
</dbReference>
<dbReference type="FunFam" id="2.60.120.10:FF:000099">
    <property type="entry name" value="1,2-dihydroxy-3-keto-5-methylthiopentene dioxygenase"/>
    <property type="match status" value="1"/>
</dbReference>
<dbReference type="Gene3D" id="2.60.120.10">
    <property type="entry name" value="Jelly Rolls"/>
    <property type="match status" value="1"/>
</dbReference>
<dbReference type="HAMAP" id="MF_03154">
    <property type="entry name" value="Salvage_MtnD_euk"/>
    <property type="match status" value="1"/>
</dbReference>
<dbReference type="InterPro" id="IPR004313">
    <property type="entry name" value="ARD"/>
</dbReference>
<dbReference type="InterPro" id="IPR027496">
    <property type="entry name" value="ARD_euk"/>
</dbReference>
<dbReference type="InterPro" id="IPR014710">
    <property type="entry name" value="RmlC-like_jellyroll"/>
</dbReference>
<dbReference type="InterPro" id="IPR011051">
    <property type="entry name" value="RmlC_Cupin_sf"/>
</dbReference>
<dbReference type="PANTHER" id="PTHR23418">
    <property type="entry name" value="ACIREDUCTONE DIOXYGENASE"/>
    <property type="match status" value="1"/>
</dbReference>
<dbReference type="PANTHER" id="PTHR23418:SF0">
    <property type="entry name" value="ACIREDUCTONE DIOXYGENASE"/>
    <property type="match status" value="1"/>
</dbReference>
<dbReference type="Pfam" id="PF03079">
    <property type="entry name" value="ARD"/>
    <property type="match status" value="1"/>
</dbReference>
<dbReference type="SUPFAM" id="SSF51182">
    <property type="entry name" value="RmlC-like cupins"/>
    <property type="match status" value="1"/>
</dbReference>
<proteinExistence type="inferred from homology"/>
<organism>
    <name type="scientific">Coprinopsis cinerea (strain Okayama-7 / 130 / ATCC MYA-4618 / FGSC 9003)</name>
    <name type="common">Inky cap fungus</name>
    <name type="synonym">Hormographiella aspergillata</name>
    <dbReference type="NCBI Taxonomy" id="240176"/>
    <lineage>
        <taxon>Eukaryota</taxon>
        <taxon>Fungi</taxon>
        <taxon>Dikarya</taxon>
        <taxon>Basidiomycota</taxon>
        <taxon>Agaricomycotina</taxon>
        <taxon>Agaricomycetes</taxon>
        <taxon>Agaricomycetidae</taxon>
        <taxon>Agaricales</taxon>
        <taxon>Agaricineae</taxon>
        <taxon>Psathyrellaceae</taxon>
        <taxon>Coprinopsis</taxon>
    </lineage>
</organism>